<sequence length="200" mass="22956">MASFDGQGFMMVDNSWVQTKAIDVESTTDISPYLSKILEDSVWNGNRSIVFDVYWDVKSVSTKSEWRLCSVKFSTKNFCLFLRLPNPFCDNLKDLYRFFASKFVTFVGVQIQEDLALLKENHGIVIRSSLEIGKLAAKARGTPIVEFLGTRELAHKILWYDMSRLDSIQSKWDEASSNDRLEAAAIEGWLIFNVYDQLQQ</sequence>
<organism>
    <name type="scientific">Arabidopsis thaliana</name>
    <name type="common">Mouse-ear cress</name>
    <dbReference type="NCBI Taxonomy" id="3702"/>
    <lineage>
        <taxon>Eukaryota</taxon>
        <taxon>Viridiplantae</taxon>
        <taxon>Streptophyta</taxon>
        <taxon>Embryophyta</taxon>
        <taxon>Tracheophyta</taxon>
        <taxon>Spermatophyta</taxon>
        <taxon>Magnoliopsida</taxon>
        <taxon>eudicotyledons</taxon>
        <taxon>Gunneridae</taxon>
        <taxon>Pentapetalae</taxon>
        <taxon>rosids</taxon>
        <taxon>malvids</taxon>
        <taxon>Brassicales</taxon>
        <taxon>Brassicaceae</taxon>
        <taxon>Camelineae</taxon>
        <taxon>Arabidopsis</taxon>
    </lineage>
</organism>
<gene>
    <name evidence="2" type="primary">RICE1</name>
    <name evidence="4" type="ordered locus">At3g11770</name>
    <name evidence="5" type="ORF">F26K24.6</name>
</gene>
<dbReference type="EC" id="3.1.13.1" evidence="1"/>
<dbReference type="EMBL" id="AC016795">
    <property type="protein sequence ID" value="AAF23193.1"/>
    <property type="molecule type" value="Genomic_DNA"/>
</dbReference>
<dbReference type="EMBL" id="CP002686">
    <property type="protein sequence ID" value="AEE75095.1"/>
    <property type="molecule type" value="Genomic_DNA"/>
</dbReference>
<dbReference type="EMBL" id="BT003106">
    <property type="protein sequence ID" value="AAO24538.1"/>
    <property type="molecule type" value="mRNA"/>
</dbReference>
<dbReference type="EMBL" id="AK228135">
    <property type="protein sequence ID" value="BAF00092.1"/>
    <property type="molecule type" value="mRNA"/>
</dbReference>
<dbReference type="RefSeq" id="NP_187783.1">
    <property type="nucleotide sequence ID" value="NM_112010.6"/>
</dbReference>
<dbReference type="PDB" id="5V5F">
    <property type="method" value="X-ray"/>
    <property type="resolution" value="2.94 A"/>
    <property type="chains" value="A/B/C=1-200"/>
</dbReference>
<dbReference type="PDBsum" id="5V5F"/>
<dbReference type="SMR" id="Q9SF21"/>
<dbReference type="FunCoup" id="Q9SF21">
    <property type="interactions" value="111"/>
</dbReference>
<dbReference type="STRING" id="3702.Q9SF21"/>
<dbReference type="PaxDb" id="3702-AT3G11770.1"/>
<dbReference type="ProteomicsDB" id="181475"/>
<dbReference type="EnsemblPlants" id="AT3G11770.1">
    <property type="protein sequence ID" value="AT3G11770.1"/>
    <property type="gene ID" value="AT3G11770"/>
</dbReference>
<dbReference type="GeneID" id="820351"/>
<dbReference type="Gramene" id="AT3G11770.1">
    <property type="protein sequence ID" value="AT3G11770.1"/>
    <property type="gene ID" value="AT3G11770"/>
</dbReference>
<dbReference type="KEGG" id="ath:AT3G11770"/>
<dbReference type="Araport" id="AT3G11770"/>
<dbReference type="TAIR" id="AT3G11770">
    <property type="gene designation" value="RICE1"/>
</dbReference>
<dbReference type="eggNOG" id="ENOG502RRGJ">
    <property type="taxonomic scope" value="Eukaryota"/>
</dbReference>
<dbReference type="HOGENOM" id="CLU_1373971_0_0_1"/>
<dbReference type="InParanoid" id="Q9SF21"/>
<dbReference type="OMA" id="NTKSEWR"/>
<dbReference type="OrthoDB" id="446462at2759"/>
<dbReference type="PhylomeDB" id="Q9SF21"/>
<dbReference type="PRO" id="PR:Q9SF21"/>
<dbReference type="Proteomes" id="UP000006548">
    <property type="component" value="Chromosome 3"/>
</dbReference>
<dbReference type="ExpressionAtlas" id="Q9SF21">
    <property type="expression patterns" value="baseline and differential"/>
</dbReference>
<dbReference type="GO" id="GO:0005737">
    <property type="term" value="C:cytoplasm"/>
    <property type="evidence" value="ECO:0000314"/>
    <property type="project" value="TAIR"/>
</dbReference>
<dbReference type="GO" id="GO:0005829">
    <property type="term" value="C:cytosol"/>
    <property type="evidence" value="ECO:0007005"/>
    <property type="project" value="TAIR"/>
</dbReference>
<dbReference type="GO" id="GO:0000325">
    <property type="term" value="C:plant-type vacuole"/>
    <property type="evidence" value="ECO:0007005"/>
    <property type="project" value="TAIR"/>
</dbReference>
<dbReference type="GO" id="GO:0008859">
    <property type="term" value="F:exoribonuclease II activity"/>
    <property type="evidence" value="ECO:0007669"/>
    <property type="project" value="UniProtKB-EC"/>
</dbReference>
<dbReference type="GO" id="GO:0003676">
    <property type="term" value="F:nucleic acid binding"/>
    <property type="evidence" value="ECO:0007669"/>
    <property type="project" value="InterPro"/>
</dbReference>
<dbReference type="GO" id="GO:1905172">
    <property type="term" value="F:RISC complex binding"/>
    <property type="evidence" value="ECO:0000314"/>
    <property type="project" value="UniProtKB"/>
</dbReference>
<dbReference type="GO" id="GO:0008310">
    <property type="term" value="F:single-stranded DNA 3'-5' DNA exonuclease activity"/>
    <property type="evidence" value="ECO:0000314"/>
    <property type="project" value="TAIR"/>
</dbReference>
<dbReference type="GO" id="GO:2000630">
    <property type="term" value="P:positive regulation of miRNA metabolic process"/>
    <property type="evidence" value="ECO:0000315"/>
    <property type="project" value="TAIR"/>
</dbReference>
<dbReference type="GO" id="GO:0031047">
    <property type="term" value="P:regulatory ncRNA-mediated gene silencing"/>
    <property type="evidence" value="ECO:0007669"/>
    <property type="project" value="UniProtKB-KW"/>
</dbReference>
<dbReference type="FunFam" id="3.30.420.10:FF:000161">
    <property type="entry name" value="Protein RISC-INTERACTING CLEARING 3'-5' EXORIBONUCLEASE 2"/>
    <property type="match status" value="1"/>
</dbReference>
<dbReference type="Gene3D" id="3.30.420.10">
    <property type="entry name" value="Ribonuclease H-like superfamily/Ribonuclease H"/>
    <property type="match status" value="1"/>
</dbReference>
<dbReference type="InterPro" id="IPR002562">
    <property type="entry name" value="3'-5'_exonuclease_dom"/>
</dbReference>
<dbReference type="InterPro" id="IPR051132">
    <property type="entry name" value="3-5_Exonuclease_domain"/>
</dbReference>
<dbReference type="InterPro" id="IPR012337">
    <property type="entry name" value="RNaseH-like_sf"/>
</dbReference>
<dbReference type="InterPro" id="IPR036397">
    <property type="entry name" value="RNaseH_sf"/>
</dbReference>
<dbReference type="PANTHER" id="PTHR13620">
    <property type="entry name" value="3-5 EXONUCLEASE"/>
    <property type="match status" value="1"/>
</dbReference>
<dbReference type="PANTHER" id="PTHR13620:SF46">
    <property type="entry name" value="PROTEIN RISC-INTERACTING CLEARING 3'-5' EXORIBONUCLEASE 1"/>
    <property type="match status" value="1"/>
</dbReference>
<dbReference type="Pfam" id="PF01612">
    <property type="entry name" value="DNA_pol_A_exo1"/>
    <property type="match status" value="1"/>
</dbReference>
<dbReference type="SUPFAM" id="SSF53098">
    <property type="entry name" value="Ribonuclease H-like"/>
    <property type="match status" value="1"/>
</dbReference>
<protein>
    <recommendedName>
        <fullName evidence="2">Protein RISC-INTERACTING CLEARING 3'-5' EXORIBONUCLEASE 1</fullName>
        <ecNumber evidence="1">3.1.13.1</ecNumber>
    </recommendedName>
</protein>
<name>RICE1_ARATH</name>
<keyword id="KW-0002">3D-structure</keyword>
<keyword id="KW-0963">Cytoplasm</keyword>
<keyword id="KW-0378">Hydrolase</keyword>
<keyword id="KW-0540">Nuclease</keyword>
<keyword id="KW-1185">Reference proteome</keyword>
<keyword id="KW-0943">RNA-mediated gene silencing</keyword>
<evidence type="ECO:0000269" key="1">
    <source>
    </source>
</evidence>
<evidence type="ECO:0000303" key="2">
    <source>
    </source>
</evidence>
<evidence type="ECO:0000305" key="3"/>
<evidence type="ECO:0000312" key="4">
    <source>
        <dbReference type="Araport" id="AT3G11770"/>
    </source>
</evidence>
<evidence type="ECO:0000312" key="5">
    <source>
        <dbReference type="EMBL" id="AAF23193.1"/>
    </source>
</evidence>
<evidence type="ECO:0007744" key="6">
    <source>
        <dbReference type="PDB" id="5V5F"/>
    </source>
</evidence>
<evidence type="ECO:0007829" key="7">
    <source>
        <dbReference type="PDB" id="5V5F"/>
    </source>
</evidence>
<accession>Q9SF21</accession>
<accession>A0A178VAY5</accession>
<comment type="function">
    <text evidence="1">3'-to-5' exoribonuclease (RNase) specifically targeting single-stranded RNAs (PubMed:28463111). Triggers miRNA accumulation in RNA-induced silencing complex (RISC), composed of miRNAs and AGO proteins, by degrading uridylated cleavage fragments (PubMed:28463111). Required during plant growth and development (PubMed:28463111).</text>
</comment>
<comment type="catalytic activity">
    <reaction evidence="1">
        <text>Exonucleolytic cleavage in the 3'- to 5'-direction to yield nucleoside 5'-phosphates.</text>
        <dbReference type="EC" id="3.1.13.1"/>
    </reaction>
</comment>
<comment type="subunit">
    <text evidence="1">Homohexamer with DnaQ-like exonuclease fold in a ring-shaped structure with a central cavity (PubMed:28463111). Component of AGO1 and AGO10-centered RNA-induced silencing complexes (RISC) (PubMed:28463111). Interacts with and acts as a cofactor of AGO1 and AGO10 (PubMed:28463111).</text>
</comment>
<comment type="subcellular location">
    <subcellularLocation>
        <location evidence="1">Cytoplasm</location>
    </subcellularLocation>
</comment>
<comment type="tissue specificity">
    <text evidence="1">Ubiquitously expressed throughout development in germinating seeds, cotyledons, leaves and roots of young seedlings and adult plants, stems and inflorescence.</text>
</comment>
<comment type="disruption phenotype">
    <text evidence="1">Little effect on miRNAs levels (PubMed:28463111). Plants lacking both RICE1 and RICE2 have reduced miRNAs levels and lower miRNA retained by AGO1, thus leading to the up-regulation of targeted mRNA transcripts (PubMed:28463111).</text>
</comment>
<comment type="similarity">
    <text evidence="3">Belongs to the RICE family.</text>
</comment>
<proteinExistence type="evidence at protein level"/>
<reference key="1">
    <citation type="journal article" date="2000" name="Nature">
        <title>Sequence and analysis of chromosome 3 of the plant Arabidopsis thaliana.</title>
        <authorList>
            <person name="Salanoubat M."/>
            <person name="Lemcke K."/>
            <person name="Rieger M."/>
            <person name="Ansorge W."/>
            <person name="Unseld M."/>
            <person name="Fartmann B."/>
            <person name="Valle G."/>
            <person name="Bloecker H."/>
            <person name="Perez-Alonso M."/>
            <person name="Obermaier B."/>
            <person name="Delseny M."/>
            <person name="Boutry M."/>
            <person name="Grivell L.A."/>
            <person name="Mache R."/>
            <person name="Puigdomenech P."/>
            <person name="De Simone V."/>
            <person name="Choisne N."/>
            <person name="Artiguenave F."/>
            <person name="Robert C."/>
            <person name="Brottier P."/>
            <person name="Wincker P."/>
            <person name="Cattolico L."/>
            <person name="Weissenbach J."/>
            <person name="Saurin W."/>
            <person name="Quetier F."/>
            <person name="Schaefer M."/>
            <person name="Mueller-Auer S."/>
            <person name="Gabel C."/>
            <person name="Fuchs M."/>
            <person name="Benes V."/>
            <person name="Wurmbach E."/>
            <person name="Drzonek H."/>
            <person name="Erfle H."/>
            <person name="Jordan N."/>
            <person name="Bangert S."/>
            <person name="Wiedelmann R."/>
            <person name="Kranz H."/>
            <person name="Voss H."/>
            <person name="Holland R."/>
            <person name="Brandt P."/>
            <person name="Nyakatura G."/>
            <person name="Vezzi A."/>
            <person name="D'Angelo M."/>
            <person name="Pallavicini A."/>
            <person name="Toppo S."/>
            <person name="Simionati B."/>
            <person name="Conrad A."/>
            <person name="Hornischer K."/>
            <person name="Kauer G."/>
            <person name="Loehnert T.-H."/>
            <person name="Nordsiek G."/>
            <person name="Reichelt J."/>
            <person name="Scharfe M."/>
            <person name="Schoen O."/>
            <person name="Bargues M."/>
            <person name="Terol J."/>
            <person name="Climent J."/>
            <person name="Navarro P."/>
            <person name="Collado C."/>
            <person name="Perez-Perez A."/>
            <person name="Ottenwaelder B."/>
            <person name="Duchemin D."/>
            <person name="Cooke R."/>
            <person name="Laudie M."/>
            <person name="Berger-Llauro C."/>
            <person name="Purnelle B."/>
            <person name="Masuy D."/>
            <person name="de Haan M."/>
            <person name="Maarse A.C."/>
            <person name="Alcaraz J.-P."/>
            <person name="Cottet A."/>
            <person name="Casacuberta E."/>
            <person name="Monfort A."/>
            <person name="Argiriou A."/>
            <person name="Flores M."/>
            <person name="Liguori R."/>
            <person name="Vitale D."/>
            <person name="Mannhaupt G."/>
            <person name="Haase D."/>
            <person name="Schoof H."/>
            <person name="Rudd S."/>
            <person name="Zaccaria P."/>
            <person name="Mewes H.-W."/>
            <person name="Mayer K.F.X."/>
            <person name="Kaul S."/>
            <person name="Town C.D."/>
            <person name="Koo H.L."/>
            <person name="Tallon L.J."/>
            <person name="Jenkins J."/>
            <person name="Rooney T."/>
            <person name="Rizzo M."/>
            <person name="Walts A."/>
            <person name="Utterback T."/>
            <person name="Fujii C.Y."/>
            <person name="Shea T.P."/>
            <person name="Creasy T.H."/>
            <person name="Haas B."/>
            <person name="Maiti R."/>
            <person name="Wu D."/>
            <person name="Peterson J."/>
            <person name="Van Aken S."/>
            <person name="Pai G."/>
            <person name="Militscher J."/>
            <person name="Sellers P."/>
            <person name="Gill J.E."/>
            <person name="Feldblyum T.V."/>
            <person name="Preuss D."/>
            <person name="Lin X."/>
            <person name="Nierman W.C."/>
            <person name="Salzberg S.L."/>
            <person name="White O."/>
            <person name="Venter J.C."/>
            <person name="Fraser C.M."/>
            <person name="Kaneko T."/>
            <person name="Nakamura Y."/>
            <person name="Sato S."/>
            <person name="Kato T."/>
            <person name="Asamizu E."/>
            <person name="Sasamoto S."/>
            <person name="Kimura T."/>
            <person name="Idesawa K."/>
            <person name="Kawashima K."/>
            <person name="Kishida Y."/>
            <person name="Kiyokawa C."/>
            <person name="Kohara M."/>
            <person name="Matsumoto M."/>
            <person name="Matsuno A."/>
            <person name="Muraki A."/>
            <person name="Nakayama S."/>
            <person name="Nakazaki N."/>
            <person name="Shinpo S."/>
            <person name="Takeuchi C."/>
            <person name="Wada T."/>
            <person name="Watanabe A."/>
            <person name="Yamada M."/>
            <person name="Yasuda M."/>
            <person name="Tabata S."/>
        </authorList>
    </citation>
    <scope>NUCLEOTIDE SEQUENCE [LARGE SCALE GENOMIC DNA]</scope>
    <source>
        <strain>cv. Columbia</strain>
    </source>
</reference>
<reference key="2">
    <citation type="journal article" date="2017" name="Plant J.">
        <title>Araport11: a complete reannotation of the Arabidopsis thaliana reference genome.</title>
        <authorList>
            <person name="Cheng C.Y."/>
            <person name="Krishnakumar V."/>
            <person name="Chan A.P."/>
            <person name="Thibaud-Nissen F."/>
            <person name="Schobel S."/>
            <person name="Town C.D."/>
        </authorList>
    </citation>
    <scope>GENOME REANNOTATION</scope>
    <source>
        <strain>cv. Columbia</strain>
    </source>
</reference>
<reference key="3">
    <citation type="journal article" date="2003" name="Science">
        <title>Empirical analysis of transcriptional activity in the Arabidopsis genome.</title>
        <authorList>
            <person name="Yamada K."/>
            <person name="Lim J."/>
            <person name="Dale J.M."/>
            <person name="Chen H."/>
            <person name="Shinn P."/>
            <person name="Palm C.J."/>
            <person name="Southwick A.M."/>
            <person name="Wu H.C."/>
            <person name="Kim C.J."/>
            <person name="Nguyen M."/>
            <person name="Pham P.K."/>
            <person name="Cheuk R.F."/>
            <person name="Karlin-Newmann G."/>
            <person name="Liu S.X."/>
            <person name="Lam B."/>
            <person name="Sakano H."/>
            <person name="Wu T."/>
            <person name="Yu G."/>
            <person name="Miranda M."/>
            <person name="Quach H.L."/>
            <person name="Tripp M."/>
            <person name="Chang C.H."/>
            <person name="Lee J.M."/>
            <person name="Toriumi M.J."/>
            <person name="Chan M.M."/>
            <person name="Tang C.C."/>
            <person name="Onodera C.S."/>
            <person name="Deng J.M."/>
            <person name="Akiyama K."/>
            <person name="Ansari Y."/>
            <person name="Arakawa T."/>
            <person name="Banh J."/>
            <person name="Banno F."/>
            <person name="Bowser L."/>
            <person name="Brooks S.Y."/>
            <person name="Carninci P."/>
            <person name="Chao Q."/>
            <person name="Choy N."/>
            <person name="Enju A."/>
            <person name="Goldsmith A.D."/>
            <person name="Gurjal M."/>
            <person name="Hansen N.F."/>
            <person name="Hayashizaki Y."/>
            <person name="Johnson-Hopson C."/>
            <person name="Hsuan V.W."/>
            <person name="Iida K."/>
            <person name="Karnes M."/>
            <person name="Khan S."/>
            <person name="Koesema E."/>
            <person name="Ishida J."/>
            <person name="Jiang P.X."/>
            <person name="Jones T."/>
            <person name="Kawai J."/>
            <person name="Kamiya A."/>
            <person name="Meyers C."/>
            <person name="Nakajima M."/>
            <person name="Narusaka M."/>
            <person name="Seki M."/>
            <person name="Sakurai T."/>
            <person name="Satou M."/>
            <person name="Tamse R."/>
            <person name="Vaysberg M."/>
            <person name="Wallender E.K."/>
            <person name="Wong C."/>
            <person name="Yamamura Y."/>
            <person name="Yuan S."/>
            <person name="Shinozaki K."/>
            <person name="Davis R.W."/>
            <person name="Theologis A."/>
            <person name="Ecker J.R."/>
        </authorList>
    </citation>
    <scope>NUCLEOTIDE SEQUENCE [LARGE SCALE MRNA]</scope>
    <source>
        <strain>cv. Columbia</strain>
    </source>
</reference>
<reference key="4">
    <citation type="submission" date="2006-07" db="EMBL/GenBank/DDBJ databases">
        <title>Large-scale analysis of RIKEN Arabidopsis full-length (RAFL) cDNAs.</title>
        <authorList>
            <person name="Totoki Y."/>
            <person name="Seki M."/>
            <person name="Ishida J."/>
            <person name="Nakajima M."/>
            <person name="Enju A."/>
            <person name="Kamiya A."/>
            <person name="Narusaka M."/>
            <person name="Shin-i T."/>
            <person name="Nakagawa M."/>
            <person name="Sakamoto N."/>
            <person name="Oishi K."/>
            <person name="Kohara Y."/>
            <person name="Kobayashi M."/>
            <person name="Toyoda A."/>
            <person name="Sakaki Y."/>
            <person name="Sakurai T."/>
            <person name="Iida K."/>
            <person name="Akiyama K."/>
            <person name="Satou M."/>
            <person name="Toyoda T."/>
            <person name="Konagaya A."/>
            <person name="Carninci P."/>
            <person name="Kawai J."/>
            <person name="Hayashizaki Y."/>
            <person name="Shinozaki K."/>
        </authorList>
    </citation>
    <scope>NUCLEOTIDE SEQUENCE [LARGE SCALE MRNA]</scope>
    <source>
        <strain>cv. Columbia</strain>
    </source>
</reference>
<reference key="5">
    <citation type="journal article" date="2017" name="Elife">
        <title>RISC-interacting clearing 3'- 5' exoribonucleases (RICEs) degrade uridylated cleavage fragments to maintain functional RISC in Arabidopsis thaliana.</title>
        <authorList>
            <person name="Zhang Z."/>
            <person name="Hu F."/>
            <person name="Sung M.W."/>
            <person name="Shu C."/>
            <person name="Castillo-Gonzalez C."/>
            <person name="Koiwa H."/>
            <person name="Tang G."/>
            <person name="Dickman M."/>
            <person name="Li P."/>
            <person name="Zhang X."/>
        </authorList>
    </citation>
    <scope>X-RAY CRYSTALLOGRAPHY (2.94 ANGSTROMS)</scope>
    <scope>FUNCTION</scope>
    <scope>MUTAGENESIS OF ARG-47; ASP-52; TYR-54; ASP-114; LYS-119 AND GLU-187</scope>
    <scope>DISRUPTION PHENOTYPE</scope>
    <scope>INTERACTION WITH AGO1 AND AGO10</scope>
    <scope>SUBUNIT</scope>
    <scope>IDENTIFICATION BY MASS SPECTROMETRY</scope>
    <scope>SUBCELLULAR LOCATION</scope>
    <scope>TISSUE SPECIFICITY</scope>
    <source>
        <strain>cv. Columbia</strain>
        <strain>cv. Landsberg erecta</strain>
    </source>
</reference>
<feature type="chain" id="PRO_0000447255" description="Protein RISC-INTERACTING CLEARING 3'-5' EXORIBONUCLEASE 1">
    <location>
        <begin position="1"/>
        <end position="200"/>
    </location>
</feature>
<feature type="region of interest" description="Oligomerization" evidence="1 6">
    <location>
        <begin position="35"/>
        <end position="66"/>
    </location>
</feature>
<feature type="region of interest" description="Oligomerization" evidence="1 6">
    <location>
        <begin position="102"/>
        <end position="127"/>
    </location>
</feature>
<feature type="region of interest" description="Oligomerization" evidence="1 6">
    <location>
        <begin position="166"/>
        <end position="173"/>
    </location>
</feature>
<feature type="mutagenesis site" description="Impaired oligomerization." evidence="1">
    <original>R</original>
    <variation>E</variation>
    <location>
        <position position="47"/>
    </location>
</feature>
<feature type="mutagenesis site" description="Normal oligomerization but impaired exoribonuclease activity. Pleiotropic developmental defects including spoon-shaped cotyledons, twisted true leaves and infertile flowers associated with reduced miRNAs and trans-acting siRNA levels. Lower miRNA retained by AGO1, but accumulation of extended uridylated 5' RNA fragments generated by RISC cleavage." evidence="1">
    <original>D</original>
    <variation>A</variation>
    <location>
        <position position="52"/>
    </location>
</feature>
<feature type="mutagenesis site" description="Normal oligomerization but impaired exoribonuclease activity. Pleiotropic developmental defects including spoon-shaped cotyledons, twisted true leaves and infertile flowers associated with reduced miRNAs and trans-acting siRNA levels." evidence="1">
    <original>Y</original>
    <variation>S</variation>
    <location>
        <position position="54"/>
    </location>
</feature>
<feature type="mutagenesis site" description="Impaired oligomerization." evidence="1">
    <original>D</original>
    <variation>E</variation>
    <location>
        <position position="114"/>
    </location>
</feature>
<feature type="mutagenesis site" description="Normal oligomerization." evidence="1">
    <original>K</original>
    <variation>E</variation>
    <location>
        <position position="119"/>
    </location>
</feature>
<feature type="mutagenesis site" description="Normal oligomerization but impaired exoribonuclease activity." evidence="1">
    <original>E</original>
    <variation>A</variation>
    <location>
        <position position="187"/>
    </location>
</feature>
<feature type="strand" evidence="7">
    <location>
        <begin position="6"/>
        <end position="10"/>
    </location>
</feature>
<feature type="strand" evidence="7">
    <location>
        <begin position="16"/>
        <end position="23"/>
    </location>
</feature>
<feature type="helix" evidence="7">
    <location>
        <begin position="31"/>
        <end position="44"/>
    </location>
</feature>
<feature type="strand" evidence="7">
    <location>
        <begin position="48"/>
        <end position="58"/>
    </location>
</feature>
<feature type="turn" evidence="7">
    <location>
        <begin position="60"/>
        <end position="62"/>
    </location>
</feature>
<feature type="strand" evidence="7">
    <location>
        <begin position="65"/>
        <end position="74"/>
    </location>
</feature>
<feature type="strand" evidence="7">
    <location>
        <begin position="76"/>
        <end position="83"/>
    </location>
</feature>
<feature type="helix" evidence="7">
    <location>
        <begin position="90"/>
        <end position="92"/>
    </location>
</feature>
<feature type="helix" evidence="7">
    <location>
        <begin position="93"/>
        <end position="99"/>
    </location>
</feature>
<feature type="strand" evidence="7">
    <location>
        <begin position="102"/>
        <end position="110"/>
    </location>
</feature>
<feature type="helix" evidence="7">
    <location>
        <begin position="112"/>
        <end position="122"/>
    </location>
</feature>
<feature type="strand" evidence="7">
    <location>
        <begin position="127"/>
        <end position="131"/>
    </location>
</feature>
<feature type="helix" evidence="7">
    <location>
        <begin position="132"/>
        <end position="140"/>
    </location>
</feature>
<feature type="helix" evidence="7">
    <location>
        <begin position="143"/>
        <end position="147"/>
    </location>
</feature>
<feature type="helix" evidence="7">
    <location>
        <begin position="150"/>
        <end position="158"/>
    </location>
</feature>
<feature type="helix" evidence="7">
    <location>
        <begin position="163"/>
        <end position="170"/>
    </location>
</feature>
<feature type="helix" evidence="7">
    <location>
        <begin position="172"/>
        <end position="174"/>
    </location>
</feature>
<feature type="helix" evidence="7">
    <location>
        <begin position="177"/>
        <end position="199"/>
    </location>
</feature>